<keyword id="KW-1015">Disulfide bond</keyword>
<keyword id="KW-0378">Hydrolase</keyword>
<keyword id="KW-0479">Metal-binding</keyword>
<keyword id="KW-0482">Metalloprotease</keyword>
<keyword id="KW-0496">Mitochondrion</keyword>
<keyword id="KW-0645">Protease</keyword>
<keyword id="KW-1185">Reference proteome</keyword>
<keyword id="KW-0809">Transit peptide</keyword>
<keyword id="KW-0862">Zinc</keyword>
<proteinExistence type="evidence at transcript level"/>
<dbReference type="EC" id="3.4.24.-" evidence="1"/>
<dbReference type="EMBL" id="BC045351">
    <property type="protein sequence ID" value="AAH45351.1"/>
    <property type="molecule type" value="mRNA"/>
</dbReference>
<dbReference type="RefSeq" id="NP_998652.1">
    <property type="nucleotide sequence ID" value="NM_213487.1"/>
</dbReference>
<dbReference type="SMR" id="Q7ZVZ6"/>
<dbReference type="FunCoup" id="Q7ZVZ6">
    <property type="interactions" value="2181"/>
</dbReference>
<dbReference type="STRING" id="7955.ENSDARP00000056293"/>
<dbReference type="PaxDb" id="7955-ENSDARP00000056293"/>
<dbReference type="PeptideAtlas" id="Q7ZVZ6"/>
<dbReference type="GeneID" id="406808"/>
<dbReference type="KEGG" id="dre:406808"/>
<dbReference type="AGR" id="ZFIN:ZDB-GENE-040426-2876"/>
<dbReference type="CTD" id="10531"/>
<dbReference type="ZFIN" id="ZDB-GENE-040426-2876">
    <property type="gene designation" value="pitrm1"/>
</dbReference>
<dbReference type="eggNOG" id="KOG2019">
    <property type="taxonomic scope" value="Eukaryota"/>
</dbReference>
<dbReference type="InParanoid" id="Q7ZVZ6"/>
<dbReference type="OrthoDB" id="10250783at2759"/>
<dbReference type="PhylomeDB" id="Q7ZVZ6"/>
<dbReference type="Reactome" id="R-DRE-1268020">
    <property type="pathway name" value="Mitochondrial protein import"/>
</dbReference>
<dbReference type="PRO" id="PR:Q7ZVZ6"/>
<dbReference type="Proteomes" id="UP000000437">
    <property type="component" value="Alternate scaffold 2"/>
</dbReference>
<dbReference type="Proteomes" id="UP000000437">
    <property type="component" value="Chromosome 2"/>
</dbReference>
<dbReference type="GO" id="GO:0005759">
    <property type="term" value="C:mitochondrial matrix"/>
    <property type="evidence" value="ECO:0000250"/>
    <property type="project" value="UniProtKB"/>
</dbReference>
<dbReference type="GO" id="GO:0046872">
    <property type="term" value="F:metal ion binding"/>
    <property type="evidence" value="ECO:0007669"/>
    <property type="project" value="UniProtKB-KW"/>
</dbReference>
<dbReference type="GO" id="GO:0004222">
    <property type="term" value="F:metalloendopeptidase activity"/>
    <property type="evidence" value="ECO:0000250"/>
    <property type="project" value="UniProtKB"/>
</dbReference>
<dbReference type="GO" id="GO:0016485">
    <property type="term" value="P:protein processing"/>
    <property type="evidence" value="ECO:0000318"/>
    <property type="project" value="GO_Central"/>
</dbReference>
<dbReference type="GO" id="GO:0006508">
    <property type="term" value="P:proteolysis"/>
    <property type="evidence" value="ECO:0000250"/>
    <property type="project" value="UniProtKB"/>
</dbReference>
<dbReference type="FunFam" id="3.30.830.10:FF:000013">
    <property type="entry name" value="Mitochondrial presequence protease"/>
    <property type="match status" value="1"/>
</dbReference>
<dbReference type="FunFam" id="3.30.830.10:FF:000020">
    <property type="entry name" value="Mitochondrial presequence protease"/>
    <property type="match status" value="1"/>
</dbReference>
<dbReference type="FunFam" id="3.30.830.10:FF:000009">
    <property type="entry name" value="Presequence protease, mitochondrial"/>
    <property type="match status" value="1"/>
</dbReference>
<dbReference type="FunFam" id="3.30.830.10:FF:000011">
    <property type="entry name" value="Presequence protease, mitochondrial"/>
    <property type="match status" value="1"/>
</dbReference>
<dbReference type="Gene3D" id="3.30.830.10">
    <property type="entry name" value="Metalloenzyme, LuxS/M16 peptidase-like"/>
    <property type="match status" value="4"/>
</dbReference>
<dbReference type="InterPro" id="IPR011249">
    <property type="entry name" value="Metalloenz_LuxS/M16"/>
</dbReference>
<dbReference type="InterPro" id="IPR011765">
    <property type="entry name" value="Pept_M16_N"/>
</dbReference>
<dbReference type="InterPro" id="IPR007863">
    <property type="entry name" value="Peptidase_M16_C"/>
</dbReference>
<dbReference type="InterPro" id="IPR013578">
    <property type="entry name" value="Peptidase_M16C_assoc"/>
</dbReference>
<dbReference type="InterPro" id="IPR055130">
    <property type="entry name" value="PreP_C"/>
</dbReference>
<dbReference type="PANTHER" id="PTHR43016">
    <property type="entry name" value="PRESEQUENCE PROTEASE"/>
    <property type="match status" value="1"/>
</dbReference>
<dbReference type="PANTHER" id="PTHR43016:SF13">
    <property type="entry name" value="PRESEQUENCE PROTEASE, MITOCHONDRIAL"/>
    <property type="match status" value="1"/>
</dbReference>
<dbReference type="Pfam" id="PF08367">
    <property type="entry name" value="M16C_assoc"/>
    <property type="match status" value="1"/>
</dbReference>
<dbReference type="Pfam" id="PF00675">
    <property type="entry name" value="Peptidase_M16"/>
    <property type="match status" value="1"/>
</dbReference>
<dbReference type="Pfam" id="PF05193">
    <property type="entry name" value="Peptidase_M16_C"/>
    <property type="match status" value="1"/>
</dbReference>
<dbReference type="Pfam" id="PF22516">
    <property type="entry name" value="PreP_C"/>
    <property type="match status" value="1"/>
</dbReference>
<dbReference type="SMART" id="SM01264">
    <property type="entry name" value="M16C_associated"/>
    <property type="match status" value="1"/>
</dbReference>
<dbReference type="SUPFAM" id="SSF63411">
    <property type="entry name" value="LuxS/MPP-like metallohydrolase"/>
    <property type="match status" value="4"/>
</dbReference>
<name>PREP_DANRE</name>
<protein>
    <recommendedName>
        <fullName evidence="3">Presequence protease, mitochondrial</fullName>
        <ecNumber evidence="1">3.4.24.-</ecNumber>
    </recommendedName>
    <alternativeName>
        <fullName evidence="1">Pitrilysin metalloproteinase 1</fullName>
    </alternativeName>
</protein>
<feature type="transit peptide" description="Mitochondrion" evidence="2">
    <location>
        <begin position="1"/>
        <end position="62"/>
    </location>
</feature>
<feature type="chain" id="PRO_0000249934" description="Presequence protease, mitochondrial">
    <location>
        <begin position="63"/>
        <end position="1023"/>
    </location>
</feature>
<feature type="active site" description="Proton acceptor" evidence="1">
    <location>
        <position position="102"/>
    </location>
</feature>
<feature type="binding site" evidence="1">
    <location>
        <position position="99"/>
    </location>
    <ligand>
        <name>Zn(2+)</name>
        <dbReference type="ChEBI" id="CHEBI:29105"/>
        <note>catalytic</note>
    </ligand>
</feature>
<feature type="binding site" evidence="1">
    <location>
        <position position="103"/>
    </location>
    <ligand>
        <name>Zn(2+)</name>
        <dbReference type="ChEBI" id="CHEBI:29105"/>
        <note>catalytic</note>
    </ligand>
</feature>
<feature type="binding site" evidence="1">
    <location>
        <position position="200"/>
    </location>
    <ligand>
        <name>Zn(2+)</name>
        <dbReference type="ChEBI" id="CHEBI:29105"/>
        <note>catalytic</note>
    </ligand>
</feature>
<feature type="disulfide bond" evidence="1">
    <location>
        <begin position="114"/>
        <end position="551"/>
    </location>
</feature>
<accession>Q7ZVZ6</accession>
<gene>
    <name type="primary">pitrm1</name>
    <name evidence="4" type="ORF">zgc:55469</name>
</gene>
<reference key="1">
    <citation type="submission" date="2003-01" db="EMBL/GenBank/DDBJ databases">
        <authorList>
            <consortium name="NIH - Zebrafish Gene Collection (ZGC) project"/>
        </authorList>
    </citation>
    <scope>NUCLEOTIDE SEQUENCE [LARGE SCALE MRNA]</scope>
    <source>
        <strain>AB</strain>
    </source>
</reference>
<sequence>MFRQSKTIITKLTNLSFQGSWRSRGSSAVEKALKYTVGQKIHNFTVKEVTAVPDLFLTAVKLSHDATGAQYLHAARDDSNNLFSVLFRTTPMDSTGVPHILEHTVLCGSQRFPCRDPFFKMLNRSLSTFMNAFTASDYTMYPFSTQNAKDFQNLLSVYLDAVFFPCLRELDFWQEGWRLEHENPTDPSSPLVFKGVVFNEMKGVFSDNERLYAQHLQNKLLPDHTYSVVSGGEPLAIPELTWEQLKHFHATHYHPSNARFFTYGDLPLEQHLQQIEEEAMSKFERTEPNTAVPPQTPWDKPRMDHVSCRPDALAPDPVKQNTLCMSFLLGDITDTFEMFTLSLLSSLMMSGPNSPFYKALIEPKIGSDFSSSAGFDGSTRQASFTIGLQGMAEDDTETVKHIIAQTIDDIIASGFEEEQIEALLHKIEIQMKHQSTSFGLALASYIASLWNHDGDPVQLLKISESVSRFRQCLKENPRYLQEKVQHYFKNNTHQLTLSMSPDERFLEKQAEAEEQKLQQKIQILSSEDRKDIYEKGLQLLAVQSTTQDASCLPALKVSDIEPIIPYTPVQPGAAGGVPVQYCEQPTNGMVYFRAMSNINSLPEDLKIYVPLFCSVITKMGSGMLDYRQQAQRIELKTGGLSVSPQIIPDTEDLDLYEQGIILSSSCLERNLPDMFQLWSDLFNSPRFDDEERLRVLVMMSAQELSNGISYSGHMYAMTRAARSLTPTADLQESFSGMDQVKFMKRIAEMTDLTSILRKLPRIKRHLFNPENMRCALNATPQKMPDVAAEVERFIGNIAGNRKERKPVRPSVVERALGPEAGAAATRKLISEAHFKPCQMKTYFQLPFNVNFVSECVRTVPFTHADYASLCILGRMMTAKFLHGEIREKGGAYGGGARMGGGGLFSFYSYRDPNSTQTLSAFRGGVEWARAGKFTQQDIDEAKLSVFSAVDAPVAPSDKGLGRFLNGITDEMKQAHRERLFAVTERNLIDVAGRYLGIGQQTCGVAILGPENESIRKDPSWVVK</sequence>
<evidence type="ECO:0000250" key="1">
    <source>
        <dbReference type="UniProtKB" id="Q5JRX3"/>
    </source>
</evidence>
<evidence type="ECO:0000255" key="2"/>
<evidence type="ECO:0000305" key="3"/>
<evidence type="ECO:0000312" key="4">
    <source>
        <dbReference type="EMBL" id="AAH45351.1"/>
    </source>
</evidence>
<comment type="function">
    <text evidence="1">Metalloendopeptidase of the mitochondrial matrix that functions in peptide cleavage and degradation rather than in protein processing. Has an ATP-independent activity. Specifically cleaves peptides in the range of 5 to 65 residues. Shows a preference for cleavage after small polar residues and before basic residues, but without any positional preference. Degrades the transit peptides of mitochondrial proteins after their cleavage. Also degrades other unstructured peptides.</text>
</comment>
<comment type="cofactor">
    <cofactor evidence="1">
        <name>Zn(2+)</name>
        <dbReference type="ChEBI" id="CHEBI:29105"/>
    </cofactor>
    <text evidence="1">Binds 1 zinc ion per subunit.</text>
</comment>
<comment type="activity regulation">
    <text evidence="1">Mainly exists in a closed and catalytically competent conformation but a closed-to-open switch allows substrate entry into the catalytic chamber. Substrate binding induces closure and dimerization. A disulfide bond may lock the enzyme in a closed conformation preventing substrate entry into the catalytic chamber, participating in redox regulation of the enzyme. Inhibited by metal-chelating agents. Inhibited by nickel and zinc excess, and slightly activated by manganese.</text>
</comment>
<comment type="subunit">
    <text evidence="1">Monomer and homodimer; homodimerization is induced by binding of the substrate.</text>
</comment>
<comment type="subcellular location">
    <subcellularLocation>
        <location evidence="1">Mitochondrion matrix</location>
    </subcellularLocation>
</comment>
<comment type="PTM">
    <text evidence="1">A disulfide bond locks the enzyme in the closed conformation preventing substrate entry into the catalytic chamber.</text>
</comment>
<comment type="similarity">
    <text evidence="3">Belongs to the peptidase M16 family. PreP subfamily.</text>
</comment>
<organism>
    <name type="scientific">Danio rerio</name>
    <name type="common">Zebrafish</name>
    <name type="synonym">Brachydanio rerio</name>
    <dbReference type="NCBI Taxonomy" id="7955"/>
    <lineage>
        <taxon>Eukaryota</taxon>
        <taxon>Metazoa</taxon>
        <taxon>Chordata</taxon>
        <taxon>Craniata</taxon>
        <taxon>Vertebrata</taxon>
        <taxon>Euteleostomi</taxon>
        <taxon>Actinopterygii</taxon>
        <taxon>Neopterygii</taxon>
        <taxon>Teleostei</taxon>
        <taxon>Ostariophysi</taxon>
        <taxon>Cypriniformes</taxon>
        <taxon>Danionidae</taxon>
        <taxon>Danioninae</taxon>
        <taxon>Danio</taxon>
    </lineage>
</organism>